<reference key="1">
    <citation type="journal article" date="1990" name="J. Bacteriol.">
        <title>Cloning, sequencing, and molecular analysis of the acetoacetate decarboxylase gene region from Clostridium acetobutylicum.</title>
        <authorList>
            <person name="Gerischer U."/>
            <person name="Duerre P."/>
        </authorList>
    </citation>
    <scope>NUCLEOTIDE SEQUENCE [GENOMIC DNA]</scope>
    <source>
        <strain>ATCC 824 / DSM 792 / JCM 1419 / IAM 19013 / LMG 5710 / NBRC 13948 / NRRL B-527 / VKM B-1787 / 2291 / W</strain>
    </source>
</reference>
<reference key="2">
    <citation type="journal article" date="2001" name="J. Bacteriol.">
        <title>Genome sequence and comparative analysis of the solvent-producing bacterium Clostridium acetobutylicum.</title>
        <authorList>
            <person name="Noelling J."/>
            <person name="Breton G."/>
            <person name="Omelchenko M.V."/>
            <person name="Makarova K.S."/>
            <person name="Zeng Q."/>
            <person name="Gibson R."/>
            <person name="Lee H.M."/>
            <person name="Dubois J."/>
            <person name="Qiu D."/>
            <person name="Hitti J."/>
            <person name="Wolf Y.I."/>
            <person name="Tatusov R.L."/>
            <person name="Sabathe F."/>
            <person name="Doucette-Stamm L.A."/>
            <person name="Soucaille P."/>
            <person name="Daly M.J."/>
            <person name="Bennett G.N."/>
            <person name="Koonin E.V."/>
            <person name="Smith D.R."/>
        </authorList>
    </citation>
    <scope>NUCLEOTIDE SEQUENCE [LARGE SCALE GENOMIC DNA]</scope>
    <source>
        <strain>ATCC 824 / DSM 792 / JCM 1419 / IAM 19013 / LMG 5710 / NBRC 13948 / NRRL B-527 / VKM B-1787 / 2291 / W</strain>
    </source>
</reference>
<geneLocation type="plasmid">
    <name>pSOL1</name>
</geneLocation>
<accession>P23672</accession>
<dbReference type="EMBL" id="M55392">
    <property type="protein sequence ID" value="AAA63760.1"/>
    <property type="molecule type" value="Genomic_DNA"/>
</dbReference>
<dbReference type="EMBL" id="AE001438">
    <property type="protein sequence ID" value="AAK76912.1"/>
    <property type="molecule type" value="Genomic_DNA"/>
</dbReference>
<dbReference type="PIR" id="C37837">
    <property type="entry name" value="C37837"/>
</dbReference>
<dbReference type="RefSeq" id="NP_149330.1">
    <property type="nucleotide sequence ID" value="NC_001988.2"/>
</dbReference>
<dbReference type="RefSeq" id="WP_010890851.1">
    <property type="nucleotide sequence ID" value="NC_001988.2"/>
</dbReference>
<dbReference type="SMR" id="P23672"/>
<dbReference type="KEGG" id="cac:CA_P0167"/>
<dbReference type="HOGENOM" id="CLU_107136_0_0_9"/>
<dbReference type="OrthoDB" id="1954605at2"/>
<dbReference type="Proteomes" id="UP000000814">
    <property type="component" value="Plasmid pSOL1"/>
</dbReference>
<dbReference type="GO" id="GO:0003700">
    <property type="term" value="F:DNA-binding transcription factor activity"/>
    <property type="evidence" value="ECO:0007669"/>
    <property type="project" value="InterPro"/>
</dbReference>
<dbReference type="GO" id="GO:0006352">
    <property type="term" value="P:DNA-templated transcription initiation"/>
    <property type="evidence" value="ECO:0007669"/>
    <property type="project" value="InterPro"/>
</dbReference>
<dbReference type="Gene3D" id="1.10.10.10">
    <property type="entry name" value="Winged helix-like DNA-binding domain superfamily/Winged helix DNA-binding domain"/>
    <property type="match status" value="1"/>
</dbReference>
<dbReference type="InterPro" id="IPR014284">
    <property type="entry name" value="RNA_pol_sigma-70_dom"/>
</dbReference>
<dbReference type="InterPro" id="IPR007627">
    <property type="entry name" value="RNA_pol_sigma70_r2"/>
</dbReference>
<dbReference type="InterPro" id="IPR013325">
    <property type="entry name" value="RNA_pol_sigma_r2"/>
</dbReference>
<dbReference type="InterPro" id="IPR013324">
    <property type="entry name" value="RNA_pol_sigma_r3/r4-like"/>
</dbReference>
<dbReference type="InterPro" id="IPR036388">
    <property type="entry name" value="WH-like_DNA-bd_sf"/>
</dbReference>
<dbReference type="NCBIfam" id="TIGR02937">
    <property type="entry name" value="sigma70-ECF"/>
    <property type="match status" value="1"/>
</dbReference>
<dbReference type="Pfam" id="PF04542">
    <property type="entry name" value="Sigma70_r2"/>
    <property type="match status" value="1"/>
</dbReference>
<dbReference type="SUPFAM" id="SSF88946">
    <property type="entry name" value="Sigma2 domain of RNA polymerase sigma factors"/>
    <property type="match status" value="1"/>
</dbReference>
<dbReference type="SUPFAM" id="SSF88659">
    <property type="entry name" value="Sigma3 and sigma4 domains of RNA polymerase sigma factors"/>
    <property type="match status" value="1"/>
</dbReference>
<proteinExistence type="predicted"/>
<feature type="chain" id="PRO_0000207118" description="Uncharacterized protein CA_P0167">
    <location>
        <begin position="1"/>
        <end position="184"/>
    </location>
</feature>
<protein>
    <recommendedName>
        <fullName>Uncharacterized protein CA_P0167</fullName>
    </recommendedName>
</protein>
<organism>
    <name type="scientific">Clostridium acetobutylicum (strain ATCC 824 / DSM 792 / JCM 1419 / IAM 19013 / LMG 5710 / NBRC 13948 / NRRL B-527 / VKM B-1787 / 2291 / W)</name>
    <dbReference type="NCBI Taxonomy" id="272562"/>
    <lineage>
        <taxon>Bacteria</taxon>
        <taxon>Bacillati</taxon>
        <taxon>Bacillota</taxon>
        <taxon>Clostridia</taxon>
        <taxon>Eubacteriales</taxon>
        <taxon>Clostridiaceae</taxon>
        <taxon>Clostridium</taxon>
    </lineage>
</organism>
<sequence length="184" mass="21562">MKPLSNENLNILVLKSRSGDNASLNKIFNYFGPFIKSFTKNIYIRNFDKSDIYEECNFSILLSIKKCDIKKYNFTAYTISSIKNNIYYKIRNQAKFQSELSLNAKVTDQNCTFQDILIDKTNHFKNLSIKNALTSLDKKEQDIIDHIYFLGYSSIEYSKKSGINYRTCLRRKNSALKKLKRKLN</sequence>
<keyword id="KW-0614">Plasmid</keyword>
<keyword id="KW-1185">Reference proteome</keyword>
<gene>
    <name type="ordered locus">CA_P0167</name>
</gene>
<name>Y4167_CLOAB</name>